<name>RL32_METM7</name>
<dbReference type="EMBL" id="CP000745">
    <property type="protein sequence ID" value="ABR65728.1"/>
    <property type="molecule type" value="Genomic_DNA"/>
</dbReference>
<dbReference type="SMR" id="A6VH02"/>
<dbReference type="STRING" id="426368.MmarC7_0661"/>
<dbReference type="KEGG" id="mmz:MmarC7_0661"/>
<dbReference type="eggNOG" id="arCOG00781">
    <property type="taxonomic scope" value="Archaea"/>
</dbReference>
<dbReference type="HOGENOM" id="CLU_071479_3_1_2"/>
<dbReference type="OrthoDB" id="372100at2157"/>
<dbReference type="GO" id="GO:0022625">
    <property type="term" value="C:cytosolic large ribosomal subunit"/>
    <property type="evidence" value="ECO:0007669"/>
    <property type="project" value="TreeGrafter"/>
</dbReference>
<dbReference type="GO" id="GO:0003735">
    <property type="term" value="F:structural constituent of ribosome"/>
    <property type="evidence" value="ECO:0007669"/>
    <property type="project" value="InterPro"/>
</dbReference>
<dbReference type="GO" id="GO:0006412">
    <property type="term" value="P:translation"/>
    <property type="evidence" value="ECO:0007669"/>
    <property type="project" value="UniProtKB-UniRule"/>
</dbReference>
<dbReference type="CDD" id="cd00513">
    <property type="entry name" value="Ribosomal_L32_L32e"/>
    <property type="match status" value="1"/>
</dbReference>
<dbReference type="HAMAP" id="MF_00810">
    <property type="entry name" value="Ribosomal_eL32"/>
    <property type="match status" value="1"/>
</dbReference>
<dbReference type="InterPro" id="IPR001515">
    <property type="entry name" value="Ribosomal_eL32"/>
</dbReference>
<dbReference type="InterPro" id="IPR023654">
    <property type="entry name" value="Ribosomal_eL32_arc"/>
</dbReference>
<dbReference type="InterPro" id="IPR018263">
    <property type="entry name" value="Ribosomal_eL32_CS"/>
</dbReference>
<dbReference type="InterPro" id="IPR036351">
    <property type="entry name" value="Ribosomal_eL32_sf"/>
</dbReference>
<dbReference type="NCBIfam" id="NF006332">
    <property type="entry name" value="PRK08562.1"/>
    <property type="match status" value="1"/>
</dbReference>
<dbReference type="PANTHER" id="PTHR23413">
    <property type="entry name" value="60S RIBOSOMAL PROTEIN L32 AND DNA-DIRECTED RNA POLYMERASE II, SUBUNIT N"/>
    <property type="match status" value="1"/>
</dbReference>
<dbReference type="PANTHER" id="PTHR23413:SF1">
    <property type="entry name" value="RIBOSOMAL PROTEIN L32"/>
    <property type="match status" value="1"/>
</dbReference>
<dbReference type="Pfam" id="PF01655">
    <property type="entry name" value="Ribosomal_L32e"/>
    <property type="match status" value="1"/>
</dbReference>
<dbReference type="SMART" id="SM01393">
    <property type="entry name" value="Ribosomal_L32e"/>
    <property type="match status" value="1"/>
</dbReference>
<dbReference type="SUPFAM" id="SSF52042">
    <property type="entry name" value="Ribosomal protein L32e"/>
    <property type="match status" value="1"/>
</dbReference>
<dbReference type="PROSITE" id="PS00580">
    <property type="entry name" value="RIBOSOMAL_L32E"/>
    <property type="match status" value="1"/>
</dbReference>
<protein>
    <recommendedName>
        <fullName evidence="1">Large ribosomal subunit protein eL32</fullName>
    </recommendedName>
    <alternativeName>
        <fullName evidence="2">50S ribosomal protein L32e</fullName>
    </alternativeName>
</protein>
<keyword id="KW-0687">Ribonucleoprotein</keyword>
<keyword id="KW-0689">Ribosomal protein</keyword>
<organism>
    <name type="scientific">Methanococcus maripaludis (strain C7 / ATCC BAA-1331)</name>
    <dbReference type="NCBI Taxonomy" id="426368"/>
    <lineage>
        <taxon>Archaea</taxon>
        <taxon>Methanobacteriati</taxon>
        <taxon>Methanobacteriota</taxon>
        <taxon>Methanomada group</taxon>
        <taxon>Methanococci</taxon>
        <taxon>Methanococcales</taxon>
        <taxon>Methanococcaceae</taxon>
        <taxon>Methanococcus</taxon>
    </lineage>
</organism>
<comment type="similarity">
    <text evidence="1">Belongs to the eukaryotic ribosomal protein eL32 family.</text>
</comment>
<feature type="chain" id="PRO_1000047108" description="Large ribosomal subunit protein eL32">
    <location>
        <begin position="1"/>
        <end position="135"/>
    </location>
</feature>
<accession>A6VH02</accession>
<reference key="1">
    <citation type="submission" date="2007-06" db="EMBL/GenBank/DDBJ databases">
        <title>Complete sequence of Methanococcus maripaludis C7.</title>
        <authorList>
            <consortium name="US DOE Joint Genome Institute"/>
            <person name="Copeland A."/>
            <person name="Lucas S."/>
            <person name="Lapidus A."/>
            <person name="Barry K."/>
            <person name="Glavina del Rio T."/>
            <person name="Dalin E."/>
            <person name="Tice H."/>
            <person name="Pitluck S."/>
            <person name="Clum A."/>
            <person name="Schmutz J."/>
            <person name="Larimer F."/>
            <person name="Land M."/>
            <person name="Hauser L."/>
            <person name="Kyrpides N."/>
            <person name="Anderson I."/>
            <person name="Sieprawska-Lupa M."/>
            <person name="Whitman W.B."/>
            <person name="Richardson P."/>
        </authorList>
    </citation>
    <scope>NUCLEOTIDE SEQUENCE [LARGE SCALE GENOMIC DNA]</scope>
    <source>
        <strain>C7 / ATCC BAA-1331</strain>
    </source>
</reference>
<evidence type="ECO:0000255" key="1">
    <source>
        <dbReference type="HAMAP-Rule" id="MF_00810"/>
    </source>
</evidence>
<evidence type="ECO:0000305" key="2"/>
<proteinExistence type="inferred from homology"/>
<sequence length="135" mass="15478">MSEFKRLMRLKLKMKQKRPEFKRQDWFKCSRIGTSWRRPFGKHSGMRIGLTHRAAVATVGYRGPALVRGLHPSGLQDILVNNVKELVAINPEIQGARIAATVGKRKRIEIVKKANELGIRVFNVSKQKQEEFLSL</sequence>
<gene>
    <name evidence="1" type="primary">rpl32e</name>
    <name type="ordered locus">MmarC7_0661</name>
</gene>